<name>NDK_COREF</name>
<feature type="chain" id="PRO_0000136972" description="Nucleoside diphosphate kinase">
    <location>
        <begin position="1"/>
        <end position="136"/>
    </location>
</feature>
<feature type="active site" description="Pros-phosphohistidine intermediate" evidence="1">
    <location>
        <position position="117"/>
    </location>
</feature>
<feature type="binding site" evidence="1">
    <location>
        <position position="10"/>
    </location>
    <ligand>
        <name>ATP</name>
        <dbReference type="ChEBI" id="CHEBI:30616"/>
    </ligand>
</feature>
<feature type="binding site" evidence="1">
    <location>
        <position position="58"/>
    </location>
    <ligand>
        <name>ATP</name>
        <dbReference type="ChEBI" id="CHEBI:30616"/>
    </ligand>
</feature>
<feature type="binding site" evidence="1">
    <location>
        <position position="86"/>
    </location>
    <ligand>
        <name>ATP</name>
        <dbReference type="ChEBI" id="CHEBI:30616"/>
    </ligand>
</feature>
<feature type="binding site" evidence="1">
    <location>
        <position position="92"/>
    </location>
    <ligand>
        <name>ATP</name>
        <dbReference type="ChEBI" id="CHEBI:30616"/>
    </ligand>
</feature>
<feature type="binding site" evidence="1">
    <location>
        <position position="104"/>
    </location>
    <ligand>
        <name>ATP</name>
        <dbReference type="ChEBI" id="CHEBI:30616"/>
    </ligand>
</feature>
<feature type="binding site" evidence="1">
    <location>
        <position position="114"/>
    </location>
    <ligand>
        <name>ATP</name>
        <dbReference type="ChEBI" id="CHEBI:30616"/>
    </ligand>
</feature>
<dbReference type="EC" id="2.7.4.6" evidence="1"/>
<dbReference type="EMBL" id="BA000035">
    <property type="protein sequence ID" value="BAC19087.1"/>
    <property type="status" value="ALT_INIT"/>
    <property type="molecule type" value="Genomic_DNA"/>
</dbReference>
<dbReference type="RefSeq" id="WP_006768281.1">
    <property type="nucleotide sequence ID" value="NZ_GG700683.1"/>
</dbReference>
<dbReference type="SMR" id="Q8FN70"/>
<dbReference type="STRING" id="196164.gene:10742708"/>
<dbReference type="KEGG" id="cef:CE2277"/>
<dbReference type="eggNOG" id="COG0105">
    <property type="taxonomic scope" value="Bacteria"/>
</dbReference>
<dbReference type="HOGENOM" id="CLU_060216_6_3_11"/>
<dbReference type="OrthoDB" id="9801161at2"/>
<dbReference type="Proteomes" id="UP000001409">
    <property type="component" value="Chromosome"/>
</dbReference>
<dbReference type="GO" id="GO:0005737">
    <property type="term" value="C:cytoplasm"/>
    <property type="evidence" value="ECO:0007669"/>
    <property type="project" value="UniProtKB-SubCell"/>
</dbReference>
<dbReference type="GO" id="GO:0005524">
    <property type="term" value="F:ATP binding"/>
    <property type="evidence" value="ECO:0007669"/>
    <property type="project" value="UniProtKB-UniRule"/>
</dbReference>
<dbReference type="GO" id="GO:0046872">
    <property type="term" value="F:metal ion binding"/>
    <property type="evidence" value="ECO:0007669"/>
    <property type="project" value="UniProtKB-KW"/>
</dbReference>
<dbReference type="GO" id="GO:0004550">
    <property type="term" value="F:nucleoside diphosphate kinase activity"/>
    <property type="evidence" value="ECO:0007669"/>
    <property type="project" value="UniProtKB-UniRule"/>
</dbReference>
<dbReference type="GO" id="GO:0006241">
    <property type="term" value="P:CTP biosynthetic process"/>
    <property type="evidence" value="ECO:0007669"/>
    <property type="project" value="UniProtKB-UniRule"/>
</dbReference>
<dbReference type="GO" id="GO:0006183">
    <property type="term" value="P:GTP biosynthetic process"/>
    <property type="evidence" value="ECO:0007669"/>
    <property type="project" value="UniProtKB-UniRule"/>
</dbReference>
<dbReference type="GO" id="GO:0006228">
    <property type="term" value="P:UTP biosynthetic process"/>
    <property type="evidence" value="ECO:0007669"/>
    <property type="project" value="UniProtKB-UniRule"/>
</dbReference>
<dbReference type="CDD" id="cd04413">
    <property type="entry name" value="NDPk_I"/>
    <property type="match status" value="1"/>
</dbReference>
<dbReference type="FunFam" id="3.30.70.141:FF:000003">
    <property type="entry name" value="Nucleoside diphosphate kinase"/>
    <property type="match status" value="1"/>
</dbReference>
<dbReference type="Gene3D" id="3.30.70.141">
    <property type="entry name" value="Nucleoside diphosphate kinase-like domain"/>
    <property type="match status" value="1"/>
</dbReference>
<dbReference type="HAMAP" id="MF_00451">
    <property type="entry name" value="NDP_kinase"/>
    <property type="match status" value="1"/>
</dbReference>
<dbReference type="InterPro" id="IPR034907">
    <property type="entry name" value="NDK-like_dom"/>
</dbReference>
<dbReference type="InterPro" id="IPR036850">
    <property type="entry name" value="NDK-like_dom_sf"/>
</dbReference>
<dbReference type="InterPro" id="IPR001564">
    <property type="entry name" value="Nucleoside_diP_kinase"/>
</dbReference>
<dbReference type="InterPro" id="IPR023005">
    <property type="entry name" value="Nucleoside_diP_kinase_AS"/>
</dbReference>
<dbReference type="NCBIfam" id="NF001908">
    <property type="entry name" value="PRK00668.1"/>
    <property type="match status" value="1"/>
</dbReference>
<dbReference type="PANTHER" id="PTHR11349">
    <property type="entry name" value="NUCLEOSIDE DIPHOSPHATE KINASE"/>
    <property type="match status" value="1"/>
</dbReference>
<dbReference type="Pfam" id="PF00334">
    <property type="entry name" value="NDK"/>
    <property type="match status" value="1"/>
</dbReference>
<dbReference type="PRINTS" id="PR01243">
    <property type="entry name" value="NUCDPKINASE"/>
</dbReference>
<dbReference type="SMART" id="SM00562">
    <property type="entry name" value="NDK"/>
    <property type="match status" value="1"/>
</dbReference>
<dbReference type="SUPFAM" id="SSF54919">
    <property type="entry name" value="Nucleoside diphosphate kinase, NDK"/>
    <property type="match status" value="1"/>
</dbReference>
<dbReference type="PROSITE" id="PS00469">
    <property type="entry name" value="NDPK"/>
    <property type="match status" value="1"/>
</dbReference>
<dbReference type="PROSITE" id="PS51374">
    <property type="entry name" value="NDPK_LIKE"/>
    <property type="match status" value="1"/>
</dbReference>
<accession>Q8FN70</accession>
<gene>
    <name evidence="1" type="primary">ndk</name>
    <name type="ordered locus">CE2277</name>
</gene>
<comment type="function">
    <text evidence="1">Major role in the synthesis of nucleoside triphosphates other than ATP. The ATP gamma phosphate is transferred to the NDP beta phosphate via a ping-pong mechanism, using a phosphorylated active-site intermediate.</text>
</comment>
<comment type="catalytic activity">
    <reaction evidence="1">
        <text>a 2'-deoxyribonucleoside 5'-diphosphate + ATP = a 2'-deoxyribonucleoside 5'-triphosphate + ADP</text>
        <dbReference type="Rhea" id="RHEA:44640"/>
        <dbReference type="ChEBI" id="CHEBI:30616"/>
        <dbReference type="ChEBI" id="CHEBI:61560"/>
        <dbReference type="ChEBI" id="CHEBI:73316"/>
        <dbReference type="ChEBI" id="CHEBI:456216"/>
        <dbReference type="EC" id="2.7.4.6"/>
    </reaction>
</comment>
<comment type="catalytic activity">
    <reaction evidence="1">
        <text>a ribonucleoside 5'-diphosphate + ATP = a ribonucleoside 5'-triphosphate + ADP</text>
        <dbReference type="Rhea" id="RHEA:18113"/>
        <dbReference type="ChEBI" id="CHEBI:30616"/>
        <dbReference type="ChEBI" id="CHEBI:57930"/>
        <dbReference type="ChEBI" id="CHEBI:61557"/>
        <dbReference type="ChEBI" id="CHEBI:456216"/>
        <dbReference type="EC" id="2.7.4.6"/>
    </reaction>
</comment>
<comment type="cofactor">
    <cofactor evidence="1">
        <name>Mg(2+)</name>
        <dbReference type="ChEBI" id="CHEBI:18420"/>
    </cofactor>
</comment>
<comment type="subunit">
    <text evidence="1">Homotetramer.</text>
</comment>
<comment type="subcellular location">
    <subcellularLocation>
        <location evidence="1">Cytoplasm</location>
    </subcellularLocation>
</comment>
<comment type="similarity">
    <text evidence="1">Belongs to the NDK family.</text>
</comment>
<comment type="sequence caution" evidence="2">
    <conflict type="erroneous initiation">
        <sequence resource="EMBL-CDS" id="BAC19087"/>
    </conflict>
</comment>
<reference key="1">
    <citation type="journal article" date="2003" name="Genome Res.">
        <title>Comparative complete genome sequence analysis of the amino acid replacements responsible for the thermostability of Corynebacterium efficiens.</title>
        <authorList>
            <person name="Nishio Y."/>
            <person name="Nakamura Y."/>
            <person name="Kawarabayasi Y."/>
            <person name="Usuda Y."/>
            <person name="Kimura E."/>
            <person name="Sugimoto S."/>
            <person name="Matsui K."/>
            <person name="Yamagishi A."/>
            <person name="Kikuchi H."/>
            <person name="Ikeo K."/>
            <person name="Gojobori T."/>
        </authorList>
    </citation>
    <scope>NUCLEOTIDE SEQUENCE [LARGE SCALE GENOMIC DNA]</scope>
    <source>
        <strain>DSM 44549 / YS-314 / AJ 12310 / JCM 11189 / NBRC 100395</strain>
    </source>
</reference>
<keyword id="KW-0067">ATP-binding</keyword>
<keyword id="KW-0963">Cytoplasm</keyword>
<keyword id="KW-0418">Kinase</keyword>
<keyword id="KW-0460">Magnesium</keyword>
<keyword id="KW-0479">Metal-binding</keyword>
<keyword id="KW-0546">Nucleotide metabolism</keyword>
<keyword id="KW-0547">Nucleotide-binding</keyword>
<keyword id="KW-0597">Phosphoprotein</keyword>
<keyword id="KW-1185">Reference proteome</keyword>
<keyword id="KW-0808">Transferase</keyword>
<proteinExistence type="inferred from homology"/>
<organism>
    <name type="scientific">Corynebacterium efficiens (strain DSM 44549 / YS-314 / AJ 12310 / JCM 11189 / NBRC 100395)</name>
    <dbReference type="NCBI Taxonomy" id="196164"/>
    <lineage>
        <taxon>Bacteria</taxon>
        <taxon>Bacillati</taxon>
        <taxon>Actinomycetota</taxon>
        <taxon>Actinomycetes</taxon>
        <taxon>Mycobacteriales</taxon>
        <taxon>Corynebacteriaceae</taxon>
        <taxon>Corynebacterium</taxon>
    </lineage>
</organism>
<evidence type="ECO:0000255" key="1">
    <source>
        <dbReference type="HAMAP-Rule" id="MF_00451"/>
    </source>
</evidence>
<evidence type="ECO:0000305" key="2"/>
<protein>
    <recommendedName>
        <fullName evidence="1">Nucleoside diphosphate kinase</fullName>
        <shortName evidence="1">NDK</shortName>
        <shortName evidence="1">NDP kinase</shortName>
        <ecNumber evidence="1">2.7.4.6</ecNumber>
    </recommendedName>
    <alternativeName>
        <fullName evidence="1">Nucleoside-2-P kinase</fullName>
    </alternativeName>
</protein>
<sequence length="136" mass="14816">MTERTLILIKPDGVTNGHVGEIIARIERKGLKLAALDLRVADRETAEKHYEEHADKPFFGELVEFITSAPLIAGIVEGERAIDAWRQLAGGTDPVSKATPGTIRGDFALTVGENVVHGSDSPESAEREISIWFPNL</sequence>